<name>MNMA_MYCPU</name>
<keyword id="KW-0067">ATP-binding</keyword>
<keyword id="KW-0963">Cytoplasm</keyword>
<keyword id="KW-1015">Disulfide bond</keyword>
<keyword id="KW-0547">Nucleotide-binding</keyword>
<keyword id="KW-1185">Reference proteome</keyword>
<keyword id="KW-0694">RNA-binding</keyword>
<keyword id="KW-0808">Transferase</keyword>
<keyword id="KW-0819">tRNA processing</keyword>
<keyword id="KW-0820">tRNA-binding</keyword>
<protein>
    <recommendedName>
        <fullName evidence="1">tRNA-specific 2-thiouridylase MnmA</fullName>
        <ecNumber evidence="1">2.8.1.13</ecNumber>
    </recommendedName>
</protein>
<accession>Q98Q11</accession>
<dbReference type="EC" id="2.8.1.13" evidence="1"/>
<dbReference type="EMBL" id="AL445565">
    <property type="protein sequence ID" value="CAC13731.1"/>
    <property type="molecule type" value="Genomic_DNA"/>
</dbReference>
<dbReference type="PIR" id="F90581">
    <property type="entry name" value="F90581"/>
</dbReference>
<dbReference type="RefSeq" id="WP_010925359.1">
    <property type="nucleotide sequence ID" value="NC_002771.1"/>
</dbReference>
<dbReference type="SMR" id="Q98Q11"/>
<dbReference type="STRING" id="272635.gene:17577165"/>
<dbReference type="KEGG" id="mpu:MYPU_5580"/>
<dbReference type="eggNOG" id="COG0482">
    <property type="taxonomic scope" value="Bacteria"/>
</dbReference>
<dbReference type="HOGENOM" id="CLU_035188_1_0_14"/>
<dbReference type="BioCyc" id="MPUL272635:G1GT6-571-MONOMER"/>
<dbReference type="Proteomes" id="UP000000528">
    <property type="component" value="Chromosome"/>
</dbReference>
<dbReference type="GO" id="GO:0005737">
    <property type="term" value="C:cytoplasm"/>
    <property type="evidence" value="ECO:0007669"/>
    <property type="project" value="UniProtKB-SubCell"/>
</dbReference>
<dbReference type="GO" id="GO:0005524">
    <property type="term" value="F:ATP binding"/>
    <property type="evidence" value="ECO:0007669"/>
    <property type="project" value="UniProtKB-KW"/>
</dbReference>
<dbReference type="GO" id="GO:0000049">
    <property type="term" value="F:tRNA binding"/>
    <property type="evidence" value="ECO:0007669"/>
    <property type="project" value="UniProtKB-KW"/>
</dbReference>
<dbReference type="GO" id="GO:0103016">
    <property type="term" value="F:tRNA-uridine 2-sulfurtransferase activity"/>
    <property type="evidence" value="ECO:0007669"/>
    <property type="project" value="UniProtKB-EC"/>
</dbReference>
<dbReference type="GO" id="GO:0002143">
    <property type="term" value="P:tRNA wobble position uridine thiolation"/>
    <property type="evidence" value="ECO:0007669"/>
    <property type="project" value="TreeGrafter"/>
</dbReference>
<dbReference type="CDD" id="cd01998">
    <property type="entry name" value="MnmA_TRMU-like"/>
    <property type="match status" value="1"/>
</dbReference>
<dbReference type="FunFam" id="2.30.30.280:FF:000001">
    <property type="entry name" value="tRNA-specific 2-thiouridylase MnmA"/>
    <property type="match status" value="1"/>
</dbReference>
<dbReference type="FunFam" id="3.40.50.620:FF:000115">
    <property type="entry name" value="tRNA-specific 2-thiouridylase MnmA"/>
    <property type="match status" value="1"/>
</dbReference>
<dbReference type="Gene3D" id="2.30.30.280">
    <property type="entry name" value="Adenine nucleotide alpha hydrolases-like domains"/>
    <property type="match status" value="1"/>
</dbReference>
<dbReference type="Gene3D" id="3.40.50.620">
    <property type="entry name" value="HUPs"/>
    <property type="match status" value="1"/>
</dbReference>
<dbReference type="Gene3D" id="2.40.30.10">
    <property type="entry name" value="Translation factors"/>
    <property type="match status" value="1"/>
</dbReference>
<dbReference type="HAMAP" id="MF_00144">
    <property type="entry name" value="tRNA_thiouridyl_MnmA"/>
    <property type="match status" value="1"/>
</dbReference>
<dbReference type="InterPro" id="IPR004506">
    <property type="entry name" value="MnmA-like"/>
</dbReference>
<dbReference type="InterPro" id="IPR046885">
    <property type="entry name" value="MnmA-like_C"/>
</dbReference>
<dbReference type="InterPro" id="IPR046884">
    <property type="entry name" value="MnmA-like_central"/>
</dbReference>
<dbReference type="InterPro" id="IPR023382">
    <property type="entry name" value="MnmA-like_central_sf"/>
</dbReference>
<dbReference type="InterPro" id="IPR014729">
    <property type="entry name" value="Rossmann-like_a/b/a_fold"/>
</dbReference>
<dbReference type="NCBIfam" id="NF001138">
    <property type="entry name" value="PRK00143.1"/>
    <property type="match status" value="1"/>
</dbReference>
<dbReference type="NCBIfam" id="TIGR00420">
    <property type="entry name" value="trmU"/>
    <property type="match status" value="1"/>
</dbReference>
<dbReference type="PANTHER" id="PTHR11933:SF5">
    <property type="entry name" value="MITOCHONDRIAL TRNA-SPECIFIC 2-THIOURIDYLASE 1"/>
    <property type="match status" value="1"/>
</dbReference>
<dbReference type="PANTHER" id="PTHR11933">
    <property type="entry name" value="TRNA 5-METHYLAMINOMETHYL-2-THIOURIDYLATE -METHYLTRANSFERASE"/>
    <property type="match status" value="1"/>
</dbReference>
<dbReference type="Pfam" id="PF03054">
    <property type="entry name" value="tRNA_Me_trans"/>
    <property type="match status" value="1"/>
</dbReference>
<dbReference type="Pfam" id="PF20258">
    <property type="entry name" value="tRNA_Me_trans_C"/>
    <property type="match status" value="1"/>
</dbReference>
<dbReference type="Pfam" id="PF20259">
    <property type="entry name" value="tRNA_Me_trans_M"/>
    <property type="match status" value="1"/>
</dbReference>
<dbReference type="SUPFAM" id="SSF52402">
    <property type="entry name" value="Adenine nucleotide alpha hydrolases-like"/>
    <property type="match status" value="1"/>
</dbReference>
<gene>
    <name evidence="1" type="primary">mnmA</name>
    <name type="synonym">trmU</name>
    <name type="ordered locus">MYPU_5580</name>
</gene>
<sequence length="371" mass="42409">MSKIVIGLSGGVDSSVAAYLLKQQGHEVIGLFMRNWDSLVNSDILGNSSLNQSLCPQEQDFQDASRVAKQIGIPIYRVDFIKEYWDSVFENLIEQYQNGFTPNPDILCNKYIKFDKFFNYAIEKFGADYVAMGHYAIAKEGNLYRGIDQSKDQSYFLTQVRSQVLEKVIFPLGNMEKSEVRRIAQEANLYTANKKDSTGICFIGERKFTDFLQNYIPTQPGTIVDITTKKIVGNHIGAMYYTLGQRKGLNLGGMKEPYFVVGHDLEKKQVFVAPASEKKWLTSNWLFAQNLNLNNHDFNPENLSAKFRYRQKDVRVKVEFLENDQIKVYYPEGFEAVTPGQQIALYDGQKCLGGAVIKNIYWNENELNYSV</sequence>
<feature type="chain" id="PRO_0000121655" description="tRNA-specific 2-thiouridylase MnmA">
    <location>
        <begin position="1"/>
        <end position="371"/>
    </location>
</feature>
<feature type="region of interest" description="Interaction with target base in tRNA" evidence="1">
    <location>
        <begin position="103"/>
        <end position="105"/>
    </location>
</feature>
<feature type="region of interest" description="Interaction with tRNA" evidence="1">
    <location>
        <begin position="151"/>
        <end position="153"/>
    </location>
</feature>
<feature type="region of interest" description="Interaction with tRNA" evidence="1">
    <location>
        <begin position="308"/>
        <end position="309"/>
    </location>
</feature>
<feature type="active site" description="Nucleophile" evidence="1">
    <location>
        <position position="108"/>
    </location>
</feature>
<feature type="active site" description="Cysteine persulfide intermediate" evidence="1">
    <location>
        <position position="201"/>
    </location>
</feature>
<feature type="binding site" evidence="1">
    <location>
        <begin position="7"/>
        <end position="14"/>
    </location>
    <ligand>
        <name>ATP</name>
        <dbReference type="ChEBI" id="CHEBI:30616"/>
    </ligand>
</feature>
<feature type="binding site" evidence="1">
    <location>
        <position position="33"/>
    </location>
    <ligand>
        <name>ATP</name>
        <dbReference type="ChEBI" id="CHEBI:30616"/>
    </ligand>
</feature>
<feature type="binding site" evidence="1">
    <location>
        <position position="133"/>
    </location>
    <ligand>
        <name>ATP</name>
        <dbReference type="ChEBI" id="CHEBI:30616"/>
    </ligand>
</feature>
<feature type="site" description="Interaction with tRNA" evidence="1">
    <location>
        <position position="134"/>
    </location>
</feature>
<feature type="site" description="Interaction with tRNA" evidence="1">
    <location>
        <position position="341"/>
    </location>
</feature>
<feature type="disulfide bond" description="Alternate" evidence="1">
    <location>
        <begin position="108"/>
        <end position="201"/>
    </location>
</feature>
<reference key="1">
    <citation type="journal article" date="2001" name="Nucleic Acids Res.">
        <title>The complete genome sequence of the murine respiratory pathogen Mycoplasma pulmonis.</title>
        <authorList>
            <person name="Chambaud I."/>
            <person name="Heilig R."/>
            <person name="Ferris S."/>
            <person name="Barbe V."/>
            <person name="Samson D."/>
            <person name="Galisson F."/>
            <person name="Moszer I."/>
            <person name="Dybvig K."/>
            <person name="Wroblewski H."/>
            <person name="Viari A."/>
            <person name="Rocha E.P.C."/>
            <person name="Blanchard A."/>
        </authorList>
    </citation>
    <scope>NUCLEOTIDE SEQUENCE [LARGE SCALE GENOMIC DNA]</scope>
    <source>
        <strain>UAB CTIP</strain>
    </source>
</reference>
<proteinExistence type="inferred from homology"/>
<evidence type="ECO:0000255" key="1">
    <source>
        <dbReference type="HAMAP-Rule" id="MF_00144"/>
    </source>
</evidence>
<comment type="function">
    <text evidence="1">Catalyzes the 2-thiolation of uridine at the wobble position (U34) of tRNA, leading to the formation of s(2)U34.</text>
</comment>
<comment type="catalytic activity">
    <reaction evidence="1">
        <text>S-sulfanyl-L-cysteinyl-[protein] + uridine(34) in tRNA + AH2 + ATP = 2-thiouridine(34) in tRNA + L-cysteinyl-[protein] + A + AMP + diphosphate + H(+)</text>
        <dbReference type="Rhea" id="RHEA:47032"/>
        <dbReference type="Rhea" id="RHEA-COMP:10131"/>
        <dbReference type="Rhea" id="RHEA-COMP:11726"/>
        <dbReference type="Rhea" id="RHEA-COMP:11727"/>
        <dbReference type="Rhea" id="RHEA-COMP:11728"/>
        <dbReference type="ChEBI" id="CHEBI:13193"/>
        <dbReference type="ChEBI" id="CHEBI:15378"/>
        <dbReference type="ChEBI" id="CHEBI:17499"/>
        <dbReference type="ChEBI" id="CHEBI:29950"/>
        <dbReference type="ChEBI" id="CHEBI:30616"/>
        <dbReference type="ChEBI" id="CHEBI:33019"/>
        <dbReference type="ChEBI" id="CHEBI:61963"/>
        <dbReference type="ChEBI" id="CHEBI:65315"/>
        <dbReference type="ChEBI" id="CHEBI:87170"/>
        <dbReference type="ChEBI" id="CHEBI:456215"/>
        <dbReference type="EC" id="2.8.1.13"/>
    </reaction>
</comment>
<comment type="subcellular location">
    <subcellularLocation>
        <location evidence="1">Cytoplasm</location>
    </subcellularLocation>
</comment>
<comment type="similarity">
    <text evidence="1">Belongs to the MnmA/TRMU family.</text>
</comment>
<organism>
    <name type="scientific">Mycoplasmopsis pulmonis (strain UAB CTIP)</name>
    <name type="common">Mycoplasma pulmonis</name>
    <dbReference type="NCBI Taxonomy" id="272635"/>
    <lineage>
        <taxon>Bacteria</taxon>
        <taxon>Bacillati</taxon>
        <taxon>Mycoplasmatota</taxon>
        <taxon>Mycoplasmoidales</taxon>
        <taxon>Metamycoplasmataceae</taxon>
        <taxon>Mycoplasmopsis</taxon>
    </lineage>
</organism>